<feature type="chain" id="PRO_0000133681" description="Probable WRKY transcription factor 40">
    <location>
        <begin position="1"/>
        <end position="302"/>
    </location>
</feature>
<feature type="DNA-binding region" description="WRKY" evidence="2">
    <location>
        <begin position="140"/>
        <end position="206"/>
    </location>
</feature>
<feature type="sequence conflict" description="In Ref. 5; BAH19836." evidence="4" ref="5">
    <original>Y</original>
    <variation>H</variation>
    <location>
        <position position="4"/>
    </location>
</feature>
<feature type="sequence conflict" description="In Ref. 5; BAH19738." evidence="4" ref="5">
    <original>E</original>
    <variation>V</variation>
    <location>
        <position position="137"/>
    </location>
</feature>
<feature type="sequence conflict" description="In Ref. 7; AAM65933." evidence="4" ref="7">
    <original>G</original>
    <variation>S</variation>
    <location>
        <position position="223"/>
    </location>
</feature>
<dbReference type="EMBL" id="AF480149">
    <property type="protein sequence ID" value="AAL85879.1"/>
    <property type="molecule type" value="mRNA"/>
</dbReference>
<dbReference type="EMBL" id="AC011713">
    <property type="protein sequence ID" value="AAF14671.1"/>
    <property type="molecule type" value="Genomic_DNA"/>
</dbReference>
<dbReference type="EMBL" id="CP002684">
    <property type="protein sequence ID" value="AEE36457.1"/>
    <property type="molecule type" value="Genomic_DNA"/>
</dbReference>
<dbReference type="EMBL" id="BT001914">
    <property type="protein sequence ID" value="AAN71913.1"/>
    <property type="molecule type" value="mRNA"/>
</dbReference>
<dbReference type="EMBL" id="AK317045">
    <property type="protein sequence ID" value="BAH19738.1"/>
    <property type="molecule type" value="mRNA"/>
</dbReference>
<dbReference type="EMBL" id="AK317150">
    <property type="protein sequence ID" value="BAH19836.1"/>
    <property type="molecule type" value="mRNA"/>
</dbReference>
<dbReference type="EMBL" id="AB493542">
    <property type="protein sequence ID" value="BAH30380.1"/>
    <property type="molecule type" value="mRNA"/>
</dbReference>
<dbReference type="EMBL" id="AY088395">
    <property type="protein sequence ID" value="AAM65933.1"/>
    <property type="molecule type" value="mRNA"/>
</dbReference>
<dbReference type="PIR" id="A96841">
    <property type="entry name" value="A96841"/>
</dbReference>
<dbReference type="RefSeq" id="NP_178199.1">
    <property type="nucleotide sequence ID" value="NM_106732.4"/>
</dbReference>
<dbReference type="SMR" id="Q9SAH7"/>
<dbReference type="BioGRID" id="29641">
    <property type="interactions" value="18"/>
</dbReference>
<dbReference type="FunCoup" id="Q9SAH7">
    <property type="interactions" value="94"/>
</dbReference>
<dbReference type="IntAct" id="Q9SAH7">
    <property type="interactions" value="9"/>
</dbReference>
<dbReference type="STRING" id="3702.Q9SAH7"/>
<dbReference type="iPTMnet" id="Q9SAH7"/>
<dbReference type="PaxDb" id="3702-AT1G80840.1"/>
<dbReference type="ProteomicsDB" id="246416"/>
<dbReference type="EnsemblPlants" id="AT1G80840.1">
    <property type="protein sequence ID" value="AT1G80840.1"/>
    <property type="gene ID" value="AT1G80840"/>
</dbReference>
<dbReference type="GeneID" id="844423"/>
<dbReference type="Gramene" id="AT1G80840.1">
    <property type="protein sequence ID" value="AT1G80840.1"/>
    <property type="gene ID" value="AT1G80840"/>
</dbReference>
<dbReference type="KEGG" id="ath:AT1G80840"/>
<dbReference type="Araport" id="AT1G80840"/>
<dbReference type="TAIR" id="AT1G80840">
    <property type="gene designation" value="WRKY40"/>
</dbReference>
<dbReference type="eggNOG" id="ENOG502QR7M">
    <property type="taxonomic scope" value="Eukaryota"/>
</dbReference>
<dbReference type="HOGENOM" id="CLU_047067_0_0_1"/>
<dbReference type="InParanoid" id="Q9SAH7"/>
<dbReference type="OMA" id="TEYMSKH"/>
<dbReference type="OrthoDB" id="1879341at2759"/>
<dbReference type="PhylomeDB" id="Q9SAH7"/>
<dbReference type="PRO" id="PR:Q9SAH7"/>
<dbReference type="Proteomes" id="UP000006548">
    <property type="component" value="Chromosome 1"/>
</dbReference>
<dbReference type="ExpressionAtlas" id="Q9SAH7">
    <property type="expression patterns" value="baseline and differential"/>
</dbReference>
<dbReference type="GO" id="GO:0005634">
    <property type="term" value="C:nucleus"/>
    <property type="evidence" value="ECO:0000314"/>
    <property type="project" value="TAIR"/>
</dbReference>
<dbReference type="GO" id="GO:0003700">
    <property type="term" value="F:DNA-binding transcription factor activity"/>
    <property type="evidence" value="ECO:0000314"/>
    <property type="project" value="TAIR"/>
</dbReference>
<dbReference type="GO" id="GO:0000976">
    <property type="term" value="F:transcription cis-regulatory region binding"/>
    <property type="evidence" value="ECO:0000353"/>
    <property type="project" value="TAIR"/>
</dbReference>
<dbReference type="GO" id="GO:0042742">
    <property type="term" value="P:defense response to bacterium"/>
    <property type="evidence" value="ECO:0000270"/>
    <property type="project" value="TAIR"/>
</dbReference>
<dbReference type="GO" id="GO:0050832">
    <property type="term" value="P:defense response to fungus"/>
    <property type="evidence" value="ECO:0000270"/>
    <property type="project" value="TAIR"/>
</dbReference>
<dbReference type="GO" id="GO:0045892">
    <property type="term" value="P:negative regulation of DNA-templated transcription"/>
    <property type="evidence" value="ECO:0000315"/>
    <property type="project" value="CACAO"/>
</dbReference>
<dbReference type="GO" id="GO:0031347">
    <property type="term" value="P:regulation of defense response"/>
    <property type="evidence" value="ECO:0000315"/>
    <property type="project" value="TAIR"/>
</dbReference>
<dbReference type="GO" id="GO:0002237">
    <property type="term" value="P:response to molecule of bacterial origin"/>
    <property type="evidence" value="ECO:0000315"/>
    <property type="project" value="TAIR"/>
</dbReference>
<dbReference type="GO" id="GO:0009751">
    <property type="term" value="P:response to salicylic acid"/>
    <property type="evidence" value="ECO:0000270"/>
    <property type="project" value="TAIR"/>
</dbReference>
<dbReference type="GO" id="GO:0009611">
    <property type="term" value="P:response to wounding"/>
    <property type="evidence" value="ECO:0000270"/>
    <property type="project" value="TAIR"/>
</dbReference>
<dbReference type="FunFam" id="2.20.25.80:FF:000008">
    <property type="entry name" value="WRKY transcription factor 40"/>
    <property type="match status" value="1"/>
</dbReference>
<dbReference type="Gene3D" id="2.20.25.80">
    <property type="entry name" value="WRKY domain"/>
    <property type="match status" value="1"/>
</dbReference>
<dbReference type="InterPro" id="IPR003657">
    <property type="entry name" value="WRKY_dom"/>
</dbReference>
<dbReference type="InterPro" id="IPR036576">
    <property type="entry name" value="WRKY_dom_sf"/>
</dbReference>
<dbReference type="InterPro" id="IPR044810">
    <property type="entry name" value="WRKY_plant"/>
</dbReference>
<dbReference type="PANTHER" id="PTHR31429">
    <property type="entry name" value="WRKY TRANSCRIPTION FACTOR 36-RELATED"/>
    <property type="match status" value="1"/>
</dbReference>
<dbReference type="PANTHER" id="PTHR31429:SF3">
    <property type="entry name" value="WRKY TRANSCRIPTION FACTOR 40-RELATED"/>
    <property type="match status" value="1"/>
</dbReference>
<dbReference type="Pfam" id="PF03106">
    <property type="entry name" value="WRKY"/>
    <property type="match status" value="1"/>
</dbReference>
<dbReference type="SMART" id="SM00774">
    <property type="entry name" value="WRKY"/>
    <property type="match status" value="1"/>
</dbReference>
<dbReference type="SUPFAM" id="SSF118290">
    <property type="entry name" value="WRKY DNA-binding domain"/>
    <property type="match status" value="1"/>
</dbReference>
<dbReference type="PROSITE" id="PS50811">
    <property type="entry name" value="WRKY"/>
    <property type="match status" value="1"/>
</dbReference>
<reference key="1">
    <citation type="submission" date="2002-01" db="EMBL/GenBank/DDBJ databases">
        <title>Arabidopsis thaliana transcription factor WRKY40.</title>
        <authorList>
            <person name="Hikaru S."/>
            <person name="Somssich I.E."/>
        </authorList>
    </citation>
    <scope>NUCLEOTIDE SEQUENCE [MRNA]</scope>
    <source>
        <strain>cv. Columbia</strain>
        <tissue>Aerial part</tissue>
    </source>
</reference>
<reference key="2">
    <citation type="journal article" date="2000" name="Nature">
        <title>Sequence and analysis of chromosome 1 of the plant Arabidopsis thaliana.</title>
        <authorList>
            <person name="Theologis A."/>
            <person name="Ecker J.R."/>
            <person name="Palm C.J."/>
            <person name="Federspiel N.A."/>
            <person name="Kaul S."/>
            <person name="White O."/>
            <person name="Alonso J."/>
            <person name="Altafi H."/>
            <person name="Araujo R."/>
            <person name="Bowman C.L."/>
            <person name="Brooks S.Y."/>
            <person name="Buehler E."/>
            <person name="Chan A."/>
            <person name="Chao Q."/>
            <person name="Chen H."/>
            <person name="Cheuk R.F."/>
            <person name="Chin C.W."/>
            <person name="Chung M.K."/>
            <person name="Conn L."/>
            <person name="Conway A.B."/>
            <person name="Conway A.R."/>
            <person name="Creasy T.H."/>
            <person name="Dewar K."/>
            <person name="Dunn P."/>
            <person name="Etgu P."/>
            <person name="Feldblyum T.V."/>
            <person name="Feng J.-D."/>
            <person name="Fong B."/>
            <person name="Fujii C.Y."/>
            <person name="Gill J.E."/>
            <person name="Goldsmith A.D."/>
            <person name="Haas B."/>
            <person name="Hansen N.F."/>
            <person name="Hughes B."/>
            <person name="Huizar L."/>
            <person name="Hunter J.L."/>
            <person name="Jenkins J."/>
            <person name="Johnson-Hopson C."/>
            <person name="Khan S."/>
            <person name="Khaykin E."/>
            <person name="Kim C.J."/>
            <person name="Koo H.L."/>
            <person name="Kremenetskaia I."/>
            <person name="Kurtz D.B."/>
            <person name="Kwan A."/>
            <person name="Lam B."/>
            <person name="Langin-Hooper S."/>
            <person name="Lee A."/>
            <person name="Lee J.M."/>
            <person name="Lenz C.A."/>
            <person name="Li J.H."/>
            <person name="Li Y.-P."/>
            <person name="Lin X."/>
            <person name="Liu S.X."/>
            <person name="Liu Z.A."/>
            <person name="Luros J.S."/>
            <person name="Maiti R."/>
            <person name="Marziali A."/>
            <person name="Militscher J."/>
            <person name="Miranda M."/>
            <person name="Nguyen M."/>
            <person name="Nierman W.C."/>
            <person name="Osborne B.I."/>
            <person name="Pai G."/>
            <person name="Peterson J."/>
            <person name="Pham P.K."/>
            <person name="Rizzo M."/>
            <person name="Rooney T."/>
            <person name="Rowley D."/>
            <person name="Sakano H."/>
            <person name="Salzberg S.L."/>
            <person name="Schwartz J.R."/>
            <person name="Shinn P."/>
            <person name="Southwick A.M."/>
            <person name="Sun H."/>
            <person name="Tallon L.J."/>
            <person name="Tambunga G."/>
            <person name="Toriumi M.J."/>
            <person name="Town C.D."/>
            <person name="Utterback T."/>
            <person name="Van Aken S."/>
            <person name="Vaysberg M."/>
            <person name="Vysotskaia V.S."/>
            <person name="Walker M."/>
            <person name="Wu D."/>
            <person name="Yu G."/>
            <person name="Fraser C.M."/>
            <person name="Venter J.C."/>
            <person name="Davis R.W."/>
        </authorList>
    </citation>
    <scope>NUCLEOTIDE SEQUENCE [LARGE SCALE GENOMIC DNA]</scope>
    <source>
        <strain>cv. Columbia</strain>
    </source>
</reference>
<reference key="3">
    <citation type="journal article" date="2017" name="Plant J.">
        <title>Araport11: a complete reannotation of the Arabidopsis thaliana reference genome.</title>
        <authorList>
            <person name="Cheng C.Y."/>
            <person name="Krishnakumar V."/>
            <person name="Chan A.P."/>
            <person name="Thibaud-Nissen F."/>
            <person name="Schobel S."/>
            <person name="Town C.D."/>
        </authorList>
    </citation>
    <scope>GENOME REANNOTATION</scope>
    <source>
        <strain>cv. Columbia</strain>
    </source>
</reference>
<reference key="4">
    <citation type="journal article" date="2003" name="Science">
        <title>Empirical analysis of transcriptional activity in the Arabidopsis genome.</title>
        <authorList>
            <person name="Yamada K."/>
            <person name="Lim J."/>
            <person name="Dale J.M."/>
            <person name="Chen H."/>
            <person name="Shinn P."/>
            <person name="Palm C.J."/>
            <person name="Southwick A.M."/>
            <person name="Wu H.C."/>
            <person name="Kim C.J."/>
            <person name="Nguyen M."/>
            <person name="Pham P.K."/>
            <person name="Cheuk R.F."/>
            <person name="Karlin-Newmann G."/>
            <person name="Liu S.X."/>
            <person name="Lam B."/>
            <person name="Sakano H."/>
            <person name="Wu T."/>
            <person name="Yu G."/>
            <person name="Miranda M."/>
            <person name="Quach H.L."/>
            <person name="Tripp M."/>
            <person name="Chang C.H."/>
            <person name="Lee J.M."/>
            <person name="Toriumi M.J."/>
            <person name="Chan M.M."/>
            <person name="Tang C.C."/>
            <person name="Onodera C.S."/>
            <person name="Deng J.M."/>
            <person name="Akiyama K."/>
            <person name="Ansari Y."/>
            <person name="Arakawa T."/>
            <person name="Banh J."/>
            <person name="Banno F."/>
            <person name="Bowser L."/>
            <person name="Brooks S.Y."/>
            <person name="Carninci P."/>
            <person name="Chao Q."/>
            <person name="Choy N."/>
            <person name="Enju A."/>
            <person name="Goldsmith A.D."/>
            <person name="Gurjal M."/>
            <person name="Hansen N.F."/>
            <person name="Hayashizaki Y."/>
            <person name="Johnson-Hopson C."/>
            <person name="Hsuan V.W."/>
            <person name="Iida K."/>
            <person name="Karnes M."/>
            <person name="Khan S."/>
            <person name="Koesema E."/>
            <person name="Ishida J."/>
            <person name="Jiang P.X."/>
            <person name="Jones T."/>
            <person name="Kawai J."/>
            <person name="Kamiya A."/>
            <person name="Meyers C."/>
            <person name="Nakajima M."/>
            <person name="Narusaka M."/>
            <person name="Seki M."/>
            <person name="Sakurai T."/>
            <person name="Satou M."/>
            <person name="Tamse R."/>
            <person name="Vaysberg M."/>
            <person name="Wallender E.K."/>
            <person name="Wong C."/>
            <person name="Yamamura Y."/>
            <person name="Yuan S."/>
            <person name="Shinozaki K."/>
            <person name="Davis R.W."/>
            <person name="Theologis A."/>
            <person name="Ecker J.R."/>
        </authorList>
    </citation>
    <scope>NUCLEOTIDE SEQUENCE [LARGE SCALE MRNA]</scope>
    <source>
        <strain>cv. Columbia</strain>
    </source>
</reference>
<reference key="5">
    <citation type="journal article" date="2009" name="DNA Res.">
        <title>Analysis of multiple occurrences of alternative splicing events in Arabidopsis thaliana using novel sequenced full-length cDNAs.</title>
        <authorList>
            <person name="Iida K."/>
            <person name="Fukami-Kobayashi K."/>
            <person name="Toyoda A."/>
            <person name="Sakaki Y."/>
            <person name="Kobayashi M."/>
            <person name="Seki M."/>
            <person name="Shinozaki K."/>
        </authorList>
    </citation>
    <scope>NUCLEOTIDE SEQUENCE [LARGE SCALE MRNA]</scope>
    <source>
        <strain>cv. Columbia</strain>
        <tissue>Rosette leaf</tissue>
    </source>
</reference>
<reference key="6">
    <citation type="submission" date="2009-03" db="EMBL/GenBank/DDBJ databases">
        <title>ORF cloning and analysis of Arabidopsis transcription factor genes.</title>
        <authorList>
            <person name="Fujita M."/>
            <person name="Mizukado S."/>
            <person name="Seki M."/>
            <person name="Shinozaki K."/>
            <person name="Mitsuda N."/>
            <person name="Takiguchi Y."/>
            <person name="Takagi M."/>
        </authorList>
    </citation>
    <scope>NUCLEOTIDE SEQUENCE [LARGE SCALE MRNA]</scope>
</reference>
<reference key="7">
    <citation type="submission" date="2002-03" db="EMBL/GenBank/DDBJ databases">
        <title>Full-length cDNA from Arabidopsis thaliana.</title>
        <authorList>
            <person name="Brover V.V."/>
            <person name="Troukhan M.E."/>
            <person name="Alexandrov N.A."/>
            <person name="Lu Y.-P."/>
            <person name="Flavell R.B."/>
            <person name="Feldmann K.A."/>
        </authorList>
    </citation>
    <scope>NUCLEOTIDE SEQUENCE [LARGE SCALE MRNA]</scope>
</reference>
<sequence>MDQYSSSLVDTSLDLTIGVTRMRVEEDPPTSALVEELNRVSAENKKLSEMLTLMCDNYNVLRKQLMEYVNKSNITERDQISPPKKRKSPAREDAFSCAVIGGVSESSSTDQDEYLCKKQREETVVKEKVSRVYYKTEASDTTLVVKDGYQWRKYGQKVTRDNPSPRAYFKCACAPSCSVKKKVQRSVEDQSVLVATYEGEHNHPMPSQIDSNNGLNRHISHGGSASTPVAANRRSSLTVPVTTVDMIESKKVTSPTSRIDFPQVQKLLVEQMASSLTKDPNFTAALAAAVTGKLYQQNHTEK</sequence>
<protein>
    <recommendedName>
        <fullName evidence="3">Probable WRKY transcription factor 40</fullName>
    </recommendedName>
    <alternativeName>
        <fullName evidence="3">WRKY DNA-binding protein 40</fullName>
    </alternativeName>
</protein>
<keyword id="KW-0238">DNA-binding</keyword>
<keyword id="KW-0539">Nucleus</keyword>
<keyword id="KW-1185">Reference proteome</keyword>
<keyword id="KW-0804">Transcription</keyword>
<keyword id="KW-0805">Transcription regulation</keyword>
<name>WRK40_ARATH</name>
<accession>Q9SAH7</accession>
<accession>B9DG71</accession>
<accession>B9DGG9</accession>
<accession>C0SV39</accession>
<accession>Q8L9J5</accession>
<organism>
    <name type="scientific">Arabidopsis thaliana</name>
    <name type="common">Mouse-ear cress</name>
    <dbReference type="NCBI Taxonomy" id="3702"/>
    <lineage>
        <taxon>Eukaryota</taxon>
        <taxon>Viridiplantae</taxon>
        <taxon>Streptophyta</taxon>
        <taxon>Embryophyta</taxon>
        <taxon>Tracheophyta</taxon>
        <taxon>Spermatophyta</taxon>
        <taxon>Magnoliopsida</taxon>
        <taxon>eudicotyledons</taxon>
        <taxon>Gunneridae</taxon>
        <taxon>Pentapetalae</taxon>
        <taxon>rosids</taxon>
        <taxon>malvids</taxon>
        <taxon>Brassicales</taxon>
        <taxon>Brassicaceae</taxon>
        <taxon>Camelineae</taxon>
        <taxon>Arabidopsis</taxon>
    </lineage>
</organism>
<proteinExistence type="evidence at protein level"/>
<evidence type="ECO:0000250" key="1">
    <source>
        <dbReference type="UniProtKB" id="Q9SUP6"/>
    </source>
</evidence>
<evidence type="ECO:0000255" key="2">
    <source>
        <dbReference type="PROSITE-ProRule" id="PRU00223"/>
    </source>
</evidence>
<evidence type="ECO:0000303" key="3">
    <source ref="1"/>
</evidence>
<evidence type="ECO:0000305" key="4"/>
<evidence type="ECO:0000312" key="5">
    <source>
        <dbReference type="Araport" id="AT1G80840"/>
    </source>
</evidence>
<evidence type="ECO:0000312" key="6">
    <source>
        <dbReference type="EMBL" id="AAF14671.1"/>
    </source>
</evidence>
<gene>
    <name evidence="3" type="primary">WRKY40</name>
    <name evidence="5" type="ordered locus">At1g80840</name>
    <name evidence="6" type="ORF">F23A5.19</name>
</gene>
<comment type="function">
    <text evidence="1">Transcription factor (By similarity). Interacts specifically with the W box (5'-(T)TGAC[CT]-3'), a frequently occurring elicitor-responsive cis-acting element (By similarity).</text>
</comment>
<comment type="interaction">
    <interactant intactId="EBI-1993363">
        <id>Q9SAH7</id>
    </interactant>
    <interactant intactId="EBI-1993349">
        <id>Q9C5T4</id>
        <label>WRKY18</label>
    </interactant>
    <organismsDiffer>false</organismsDiffer>
    <experiments>7</experiments>
</comment>
<comment type="interaction">
    <interactant intactId="EBI-1993363">
        <id>Q9SAH7</id>
    </interactant>
    <interactant intactId="EBI-1993263">
        <id>Q8GWF1</id>
        <label>WRKY38</label>
    </interactant>
    <organismsDiffer>false</organismsDiffer>
    <experiments>6</experiments>
</comment>
<comment type="interaction">
    <interactant intactId="EBI-1993363">
        <id>Q9SAH7</id>
    </interactant>
    <interactant intactId="EBI-2112777">
        <id>Q9SK33</id>
        <label>WRKY60</label>
    </interactant>
    <organismsDiffer>false</organismsDiffer>
    <experiments>5</experiments>
</comment>
<comment type="subcellular location">
    <subcellularLocation>
        <location evidence="2">Nucleus</location>
    </subcellularLocation>
</comment>
<comment type="similarity">
    <text evidence="4">Belongs to the WRKY group III family.</text>
</comment>